<reference key="1">
    <citation type="journal article" date="2007" name="Genome Biol.">
        <title>Comparison of Francisella tularensis genomes reveals evolutionary events associated with the emergence of human pathogenic strains.</title>
        <authorList>
            <person name="Rohmer L."/>
            <person name="Fong C."/>
            <person name="Abmayr S."/>
            <person name="Wasnick M."/>
            <person name="Larson Freeman T.J."/>
            <person name="Radey M."/>
            <person name="Guina T."/>
            <person name="Svensson K."/>
            <person name="Hayden H.S."/>
            <person name="Jacobs M."/>
            <person name="Gallagher L.A."/>
            <person name="Manoil C."/>
            <person name="Ernst R.K."/>
            <person name="Drees B."/>
            <person name="Buckley D."/>
            <person name="Haugen E."/>
            <person name="Bovee D."/>
            <person name="Zhou Y."/>
            <person name="Chang J."/>
            <person name="Levy R."/>
            <person name="Lim R."/>
            <person name="Gillett W."/>
            <person name="Guenthener D."/>
            <person name="Kang A."/>
            <person name="Shaffer S.A."/>
            <person name="Taylor G."/>
            <person name="Chen J."/>
            <person name="Gallis B."/>
            <person name="D'Argenio D.A."/>
            <person name="Forsman M."/>
            <person name="Olson M.V."/>
            <person name="Goodlett D.R."/>
            <person name="Kaul R."/>
            <person name="Miller S.I."/>
            <person name="Brittnacher M.J."/>
        </authorList>
    </citation>
    <scope>NUCLEOTIDE SEQUENCE [LARGE SCALE GENOMIC DNA]</scope>
    <source>
        <strain>U112</strain>
    </source>
</reference>
<keyword id="KW-0067">ATP-binding</keyword>
<keyword id="KW-0963">Cytoplasm</keyword>
<keyword id="KW-0418">Kinase</keyword>
<keyword id="KW-0545">Nucleotide biosynthesis</keyword>
<keyword id="KW-0547">Nucleotide-binding</keyword>
<keyword id="KW-0808">Transferase</keyword>
<name>KAD_FRATN</name>
<proteinExistence type="inferred from homology"/>
<dbReference type="EC" id="2.7.4.3" evidence="1"/>
<dbReference type="EMBL" id="CP000439">
    <property type="protein sequence ID" value="ABK90028.1"/>
    <property type="molecule type" value="Genomic_DNA"/>
</dbReference>
<dbReference type="RefSeq" id="WP_003018613.1">
    <property type="nucleotide sequence ID" value="NZ_CP009633.1"/>
</dbReference>
<dbReference type="SMR" id="A0Q713"/>
<dbReference type="KEGG" id="ftn:FTN_1142"/>
<dbReference type="KEGG" id="ftx:AW25_866"/>
<dbReference type="BioCyc" id="FTUL401614:G1G75-1184-MONOMER"/>
<dbReference type="UniPathway" id="UPA00588">
    <property type="reaction ID" value="UER00649"/>
</dbReference>
<dbReference type="Proteomes" id="UP000000762">
    <property type="component" value="Chromosome"/>
</dbReference>
<dbReference type="GO" id="GO:0005737">
    <property type="term" value="C:cytoplasm"/>
    <property type="evidence" value="ECO:0007669"/>
    <property type="project" value="UniProtKB-SubCell"/>
</dbReference>
<dbReference type="GO" id="GO:0004017">
    <property type="term" value="F:adenylate kinase activity"/>
    <property type="evidence" value="ECO:0007669"/>
    <property type="project" value="UniProtKB-UniRule"/>
</dbReference>
<dbReference type="GO" id="GO:0005524">
    <property type="term" value="F:ATP binding"/>
    <property type="evidence" value="ECO:0007669"/>
    <property type="project" value="UniProtKB-UniRule"/>
</dbReference>
<dbReference type="GO" id="GO:0044209">
    <property type="term" value="P:AMP salvage"/>
    <property type="evidence" value="ECO:0007669"/>
    <property type="project" value="UniProtKB-UniRule"/>
</dbReference>
<dbReference type="CDD" id="cd01428">
    <property type="entry name" value="ADK"/>
    <property type="match status" value="1"/>
</dbReference>
<dbReference type="FunFam" id="3.40.50.300:FF:000106">
    <property type="entry name" value="Adenylate kinase mitochondrial"/>
    <property type="match status" value="1"/>
</dbReference>
<dbReference type="Gene3D" id="3.40.50.300">
    <property type="entry name" value="P-loop containing nucleotide triphosphate hydrolases"/>
    <property type="match status" value="1"/>
</dbReference>
<dbReference type="HAMAP" id="MF_00235">
    <property type="entry name" value="Adenylate_kinase_Adk"/>
    <property type="match status" value="1"/>
</dbReference>
<dbReference type="InterPro" id="IPR006259">
    <property type="entry name" value="Adenyl_kin_sub"/>
</dbReference>
<dbReference type="InterPro" id="IPR000850">
    <property type="entry name" value="Adenylat/UMP-CMP_kin"/>
</dbReference>
<dbReference type="InterPro" id="IPR007862">
    <property type="entry name" value="Adenylate_kinase_lid-dom"/>
</dbReference>
<dbReference type="InterPro" id="IPR027417">
    <property type="entry name" value="P-loop_NTPase"/>
</dbReference>
<dbReference type="NCBIfam" id="TIGR01351">
    <property type="entry name" value="adk"/>
    <property type="match status" value="1"/>
</dbReference>
<dbReference type="NCBIfam" id="NF001379">
    <property type="entry name" value="PRK00279.1-1"/>
    <property type="match status" value="1"/>
</dbReference>
<dbReference type="NCBIfam" id="NF001380">
    <property type="entry name" value="PRK00279.1-2"/>
    <property type="match status" value="1"/>
</dbReference>
<dbReference type="NCBIfam" id="NF001381">
    <property type="entry name" value="PRK00279.1-3"/>
    <property type="match status" value="1"/>
</dbReference>
<dbReference type="PANTHER" id="PTHR23359">
    <property type="entry name" value="NUCLEOTIDE KINASE"/>
    <property type="match status" value="1"/>
</dbReference>
<dbReference type="Pfam" id="PF00406">
    <property type="entry name" value="ADK"/>
    <property type="match status" value="1"/>
</dbReference>
<dbReference type="Pfam" id="PF05191">
    <property type="entry name" value="ADK_lid"/>
    <property type="match status" value="1"/>
</dbReference>
<dbReference type="PRINTS" id="PR00094">
    <property type="entry name" value="ADENYLTKNASE"/>
</dbReference>
<dbReference type="SUPFAM" id="SSF52540">
    <property type="entry name" value="P-loop containing nucleoside triphosphate hydrolases"/>
    <property type="match status" value="1"/>
</dbReference>
<accession>A0Q713</accession>
<organism>
    <name type="scientific">Francisella tularensis subsp. novicida (strain U112)</name>
    <dbReference type="NCBI Taxonomy" id="401614"/>
    <lineage>
        <taxon>Bacteria</taxon>
        <taxon>Pseudomonadati</taxon>
        <taxon>Pseudomonadota</taxon>
        <taxon>Gammaproteobacteria</taxon>
        <taxon>Thiotrichales</taxon>
        <taxon>Francisellaceae</taxon>
        <taxon>Francisella</taxon>
    </lineage>
</organism>
<feature type="chain" id="PRO_1000058830" description="Adenylate kinase">
    <location>
        <begin position="1"/>
        <end position="218"/>
    </location>
</feature>
<feature type="region of interest" description="NMP" evidence="1">
    <location>
        <begin position="30"/>
        <end position="59"/>
    </location>
</feature>
<feature type="region of interest" description="LID" evidence="1">
    <location>
        <begin position="122"/>
        <end position="159"/>
    </location>
</feature>
<feature type="binding site" evidence="1">
    <location>
        <begin position="10"/>
        <end position="15"/>
    </location>
    <ligand>
        <name>ATP</name>
        <dbReference type="ChEBI" id="CHEBI:30616"/>
    </ligand>
</feature>
<feature type="binding site" evidence="1">
    <location>
        <position position="31"/>
    </location>
    <ligand>
        <name>AMP</name>
        <dbReference type="ChEBI" id="CHEBI:456215"/>
    </ligand>
</feature>
<feature type="binding site" evidence="1">
    <location>
        <position position="36"/>
    </location>
    <ligand>
        <name>AMP</name>
        <dbReference type="ChEBI" id="CHEBI:456215"/>
    </ligand>
</feature>
<feature type="binding site" evidence="1">
    <location>
        <begin position="57"/>
        <end position="59"/>
    </location>
    <ligand>
        <name>AMP</name>
        <dbReference type="ChEBI" id="CHEBI:456215"/>
    </ligand>
</feature>
<feature type="binding site" evidence="1">
    <location>
        <position position="92"/>
    </location>
    <ligand>
        <name>AMP</name>
        <dbReference type="ChEBI" id="CHEBI:456215"/>
    </ligand>
</feature>
<feature type="binding site" evidence="1">
    <location>
        <position position="123"/>
    </location>
    <ligand>
        <name>ATP</name>
        <dbReference type="ChEBI" id="CHEBI:30616"/>
    </ligand>
</feature>
<feature type="binding site" evidence="1">
    <location>
        <begin position="132"/>
        <end position="133"/>
    </location>
    <ligand>
        <name>ATP</name>
        <dbReference type="ChEBI" id="CHEBI:30616"/>
    </ligand>
</feature>
<feature type="binding site" evidence="1">
    <location>
        <position position="156"/>
    </location>
    <ligand>
        <name>AMP</name>
        <dbReference type="ChEBI" id="CHEBI:456215"/>
    </ligand>
</feature>
<feature type="binding site" evidence="1">
    <location>
        <position position="167"/>
    </location>
    <ligand>
        <name>AMP</name>
        <dbReference type="ChEBI" id="CHEBI:456215"/>
    </ligand>
</feature>
<feature type="binding site" evidence="1">
    <location>
        <position position="202"/>
    </location>
    <ligand>
        <name>ATP</name>
        <dbReference type="ChEBI" id="CHEBI:30616"/>
    </ligand>
</feature>
<gene>
    <name evidence="1" type="primary">adk</name>
    <name type="ordered locus">FTN_1142</name>
</gene>
<evidence type="ECO:0000255" key="1">
    <source>
        <dbReference type="HAMAP-Rule" id="MF_00235"/>
    </source>
</evidence>
<sequence length="218" mass="24362">MRIILLGAPGAGKGTQAKIIEQKYNIAHISTGDMIRETIKSGSALGQELKKVLDAGELVSDEFIIKIVKDRISKNDCNNGFLLDGVPRTIPQAQELDKLGVNIDYIVEVDVADNLLIERITGRRIHPASGRTYHTKFNPPKVADKDDVTGEPLITRTDDNEDTVKQRLSVYHAQTAKLIDFYRNFSSTNTKIPKYIKINGDQAVEKVSQDIFDQLNKR</sequence>
<protein>
    <recommendedName>
        <fullName evidence="1">Adenylate kinase</fullName>
        <shortName evidence="1">AK</shortName>
        <ecNumber evidence="1">2.7.4.3</ecNumber>
    </recommendedName>
    <alternativeName>
        <fullName evidence="1">ATP-AMP transphosphorylase</fullName>
    </alternativeName>
    <alternativeName>
        <fullName evidence="1">ATP:AMP phosphotransferase</fullName>
    </alternativeName>
    <alternativeName>
        <fullName evidence="1">Adenylate monophosphate kinase</fullName>
    </alternativeName>
</protein>
<comment type="function">
    <text evidence="1">Catalyzes the reversible transfer of the terminal phosphate group between ATP and AMP. Plays an important role in cellular energy homeostasis and in adenine nucleotide metabolism.</text>
</comment>
<comment type="catalytic activity">
    <reaction evidence="1">
        <text>AMP + ATP = 2 ADP</text>
        <dbReference type="Rhea" id="RHEA:12973"/>
        <dbReference type="ChEBI" id="CHEBI:30616"/>
        <dbReference type="ChEBI" id="CHEBI:456215"/>
        <dbReference type="ChEBI" id="CHEBI:456216"/>
        <dbReference type="EC" id="2.7.4.3"/>
    </reaction>
</comment>
<comment type="pathway">
    <text evidence="1">Purine metabolism; AMP biosynthesis via salvage pathway; AMP from ADP: step 1/1.</text>
</comment>
<comment type="subunit">
    <text evidence="1">Monomer.</text>
</comment>
<comment type="subcellular location">
    <subcellularLocation>
        <location evidence="1">Cytoplasm</location>
    </subcellularLocation>
</comment>
<comment type="domain">
    <text evidence="1">Consists of three domains, a large central CORE domain and two small peripheral domains, NMPbind and LID, which undergo movements during catalysis. The LID domain closes over the site of phosphoryl transfer upon ATP binding. Assembling and dissambling the active center during each catalytic cycle provides an effective means to prevent ATP hydrolysis.</text>
</comment>
<comment type="similarity">
    <text evidence="1">Belongs to the adenylate kinase family.</text>
</comment>